<proteinExistence type="inferred from homology"/>
<keyword id="KW-0687">Ribonucleoprotein</keyword>
<keyword id="KW-0689">Ribosomal protein</keyword>
<keyword id="KW-0694">RNA-binding</keyword>
<keyword id="KW-0699">rRNA-binding</keyword>
<name>RS5_CHLMU</name>
<organism>
    <name type="scientific">Chlamydia muridarum (strain MoPn / Nigg)</name>
    <dbReference type="NCBI Taxonomy" id="243161"/>
    <lineage>
        <taxon>Bacteria</taxon>
        <taxon>Pseudomonadati</taxon>
        <taxon>Chlamydiota</taxon>
        <taxon>Chlamydiia</taxon>
        <taxon>Chlamydiales</taxon>
        <taxon>Chlamydiaceae</taxon>
        <taxon>Chlamydia/Chlamydophila group</taxon>
        <taxon>Chlamydia</taxon>
    </lineage>
</organism>
<accession>P0A4C9</accession>
<accession>P28543</accession>
<gene>
    <name evidence="1" type="primary">rpsE</name>
    <name type="synonym">rs5</name>
    <name type="ordered locus">TC_0799</name>
</gene>
<sequence length="165" mass="17762">MTLSRNSHKEDQLEEKVLVVNRCCKVVKGGRKFSFSALILVGDRKGRLGFGFAKANELTDAIRKGGDAARKNLVSINSLEGGSIPHEVLVNHDGAELLLKPAKPGTGIVAGSRIRLILEMAGVKDIVAKSLGSNNPMNQVKAAFKALLTLSCKDDIMKRRAVIND</sequence>
<feature type="chain" id="PRO_0000131497" description="Small ribosomal subunit protein uS5">
    <location>
        <begin position="1"/>
        <end position="165"/>
    </location>
</feature>
<feature type="domain" description="S5 DRBM" evidence="1">
    <location>
        <begin position="13"/>
        <end position="76"/>
    </location>
</feature>
<protein>
    <recommendedName>
        <fullName evidence="1">Small ribosomal subunit protein uS5</fullName>
    </recommendedName>
    <alternativeName>
        <fullName evidence="2">30S ribosomal protein S5</fullName>
    </alternativeName>
</protein>
<reference key="1">
    <citation type="journal article" date="2000" name="Nucleic Acids Res.">
        <title>Genome sequences of Chlamydia trachomatis MoPn and Chlamydia pneumoniae AR39.</title>
        <authorList>
            <person name="Read T.D."/>
            <person name="Brunham R.C."/>
            <person name="Shen C."/>
            <person name="Gill S.R."/>
            <person name="Heidelberg J.F."/>
            <person name="White O."/>
            <person name="Hickey E.K."/>
            <person name="Peterson J.D."/>
            <person name="Utterback T.R."/>
            <person name="Berry K.J."/>
            <person name="Bass S."/>
            <person name="Linher K.D."/>
            <person name="Weidman J.F."/>
            <person name="Khouri H.M."/>
            <person name="Craven B."/>
            <person name="Bowman C."/>
            <person name="Dodson R.J."/>
            <person name="Gwinn M.L."/>
            <person name="Nelson W.C."/>
            <person name="DeBoy R.T."/>
            <person name="Kolonay J.F."/>
            <person name="McClarty G."/>
            <person name="Salzberg S.L."/>
            <person name="Eisen J.A."/>
            <person name="Fraser C.M."/>
        </authorList>
    </citation>
    <scope>NUCLEOTIDE SEQUENCE [LARGE SCALE GENOMIC DNA]</scope>
    <source>
        <strain>MoPn / Nigg</strain>
    </source>
</reference>
<dbReference type="EMBL" id="AE002160">
    <property type="protein sequence ID" value="AAF39602.1"/>
    <property type="molecule type" value="Genomic_DNA"/>
</dbReference>
<dbReference type="PIR" id="G81663">
    <property type="entry name" value="G81663"/>
</dbReference>
<dbReference type="RefSeq" id="WP_009871876.1">
    <property type="nucleotide sequence ID" value="NZ_CP063055.1"/>
</dbReference>
<dbReference type="SMR" id="P0A4C9"/>
<dbReference type="GeneID" id="1246166"/>
<dbReference type="KEGG" id="cmu:TC_0799"/>
<dbReference type="eggNOG" id="COG0098">
    <property type="taxonomic scope" value="Bacteria"/>
</dbReference>
<dbReference type="HOGENOM" id="CLU_065898_2_2_0"/>
<dbReference type="OrthoDB" id="9809045at2"/>
<dbReference type="Proteomes" id="UP000000800">
    <property type="component" value="Chromosome"/>
</dbReference>
<dbReference type="GO" id="GO:0015935">
    <property type="term" value="C:small ribosomal subunit"/>
    <property type="evidence" value="ECO:0007669"/>
    <property type="project" value="InterPro"/>
</dbReference>
<dbReference type="GO" id="GO:0019843">
    <property type="term" value="F:rRNA binding"/>
    <property type="evidence" value="ECO:0007669"/>
    <property type="project" value="UniProtKB-UniRule"/>
</dbReference>
<dbReference type="GO" id="GO:0003735">
    <property type="term" value="F:structural constituent of ribosome"/>
    <property type="evidence" value="ECO:0007669"/>
    <property type="project" value="InterPro"/>
</dbReference>
<dbReference type="GO" id="GO:0006412">
    <property type="term" value="P:translation"/>
    <property type="evidence" value="ECO:0007669"/>
    <property type="project" value="UniProtKB-UniRule"/>
</dbReference>
<dbReference type="FunFam" id="3.30.160.20:FF:000066">
    <property type="entry name" value="30S ribosomal protein S5"/>
    <property type="match status" value="1"/>
</dbReference>
<dbReference type="FunFam" id="3.30.230.10:FF:000002">
    <property type="entry name" value="30S ribosomal protein S5"/>
    <property type="match status" value="1"/>
</dbReference>
<dbReference type="Gene3D" id="3.30.160.20">
    <property type="match status" value="1"/>
</dbReference>
<dbReference type="Gene3D" id="3.30.230.10">
    <property type="match status" value="1"/>
</dbReference>
<dbReference type="HAMAP" id="MF_01307_B">
    <property type="entry name" value="Ribosomal_uS5_B"/>
    <property type="match status" value="1"/>
</dbReference>
<dbReference type="InterPro" id="IPR020568">
    <property type="entry name" value="Ribosomal_Su5_D2-typ_SF"/>
</dbReference>
<dbReference type="InterPro" id="IPR000851">
    <property type="entry name" value="Ribosomal_uS5"/>
</dbReference>
<dbReference type="InterPro" id="IPR005712">
    <property type="entry name" value="Ribosomal_uS5_bac-type"/>
</dbReference>
<dbReference type="InterPro" id="IPR005324">
    <property type="entry name" value="Ribosomal_uS5_C"/>
</dbReference>
<dbReference type="InterPro" id="IPR013810">
    <property type="entry name" value="Ribosomal_uS5_N"/>
</dbReference>
<dbReference type="InterPro" id="IPR018192">
    <property type="entry name" value="Ribosomal_uS5_N_CS"/>
</dbReference>
<dbReference type="InterPro" id="IPR014721">
    <property type="entry name" value="Ribsml_uS5_D2-typ_fold_subgr"/>
</dbReference>
<dbReference type="NCBIfam" id="TIGR01021">
    <property type="entry name" value="rpsE_bact"/>
    <property type="match status" value="1"/>
</dbReference>
<dbReference type="PANTHER" id="PTHR48277">
    <property type="entry name" value="MITOCHONDRIAL RIBOSOMAL PROTEIN S5"/>
    <property type="match status" value="1"/>
</dbReference>
<dbReference type="PANTHER" id="PTHR48277:SF1">
    <property type="entry name" value="MITOCHONDRIAL RIBOSOMAL PROTEIN S5"/>
    <property type="match status" value="1"/>
</dbReference>
<dbReference type="Pfam" id="PF00333">
    <property type="entry name" value="Ribosomal_S5"/>
    <property type="match status" value="1"/>
</dbReference>
<dbReference type="Pfam" id="PF03719">
    <property type="entry name" value="Ribosomal_S5_C"/>
    <property type="match status" value="1"/>
</dbReference>
<dbReference type="SUPFAM" id="SSF54768">
    <property type="entry name" value="dsRNA-binding domain-like"/>
    <property type="match status" value="1"/>
</dbReference>
<dbReference type="SUPFAM" id="SSF54211">
    <property type="entry name" value="Ribosomal protein S5 domain 2-like"/>
    <property type="match status" value="1"/>
</dbReference>
<dbReference type="PROSITE" id="PS00585">
    <property type="entry name" value="RIBOSOMAL_S5"/>
    <property type="match status" value="1"/>
</dbReference>
<dbReference type="PROSITE" id="PS50881">
    <property type="entry name" value="S5_DSRBD"/>
    <property type="match status" value="1"/>
</dbReference>
<comment type="function">
    <text evidence="1">With S4 and S12 plays an important role in translational accuracy.</text>
</comment>
<comment type="function">
    <text evidence="1">Located at the back of the 30S subunit body where it stabilizes the conformation of the head with respect to the body.</text>
</comment>
<comment type="subunit">
    <text evidence="1">Part of the 30S ribosomal subunit. Contacts proteins S4 and S8.</text>
</comment>
<comment type="domain">
    <text>The N-terminal domain interacts with the head of the 30S subunit; the C-terminal domain interacts with the body and contacts protein S4. The interaction surface between S4 and S5 is involved in control of translational fidelity.</text>
</comment>
<comment type="similarity">
    <text evidence="1">Belongs to the universal ribosomal protein uS5 family.</text>
</comment>
<evidence type="ECO:0000255" key="1">
    <source>
        <dbReference type="HAMAP-Rule" id="MF_01307"/>
    </source>
</evidence>
<evidence type="ECO:0000305" key="2"/>